<gene>
    <name evidence="1" type="primary">frdD</name>
    <name type="ordered locus">SeD_A4737</name>
</gene>
<evidence type="ECO:0000255" key="1">
    <source>
        <dbReference type="HAMAP-Rule" id="MF_00709"/>
    </source>
</evidence>
<sequence length="119" mass="13049">MINPNPKRSDEPVFWGLFGAGGMWGAIIAPVIVLLVGIMLPLGLFPGDALSFERVLTFAQSFIGRVFLFLMIVLPLWCGLHRMHHAMHDLKIHVPAGKWVFYGLAAILTVVTAIGVITL</sequence>
<name>FRDD_SALDC</name>
<comment type="function">
    <text evidence="1">Two distinct, membrane-bound, FAD-containing enzymes are responsible for the catalysis of fumarate and succinate interconversion; fumarate reductase is used in anaerobic growth, and succinate dehydrogenase is used in aerobic growth. Anchors the catalytic components of the fumarate reductase complex to the cell inner membrane, binds quinones.</text>
</comment>
<comment type="subunit">
    <text evidence="1">Part of an enzyme complex containing four subunits: a flavoprotein (FrdA), an iron-sulfur protein (FrdB), and two hydrophobic anchor proteins (FrdC and FrdD).</text>
</comment>
<comment type="subcellular location">
    <subcellularLocation>
        <location evidence="1">Cell inner membrane</location>
        <topology evidence="1">Multi-pass membrane protein</topology>
    </subcellularLocation>
</comment>
<comment type="similarity">
    <text evidence="1">Belongs to the FrdD family.</text>
</comment>
<protein>
    <recommendedName>
        <fullName evidence="1">Fumarate reductase subunit D</fullName>
    </recommendedName>
    <alternativeName>
        <fullName evidence="1">Fumarate reductase 13 kDa hydrophobic protein</fullName>
    </alternativeName>
    <alternativeName>
        <fullName evidence="1">Quinol-fumarate reductase subunit D</fullName>
        <shortName evidence="1">QFR subunit D</shortName>
    </alternativeName>
</protein>
<proteinExistence type="inferred from homology"/>
<dbReference type="EMBL" id="CP001144">
    <property type="protein sequence ID" value="ACH76757.1"/>
    <property type="molecule type" value="Genomic_DNA"/>
</dbReference>
<dbReference type="RefSeq" id="WP_000609650.1">
    <property type="nucleotide sequence ID" value="NC_011205.1"/>
</dbReference>
<dbReference type="SMR" id="B5FRL0"/>
<dbReference type="KEGG" id="sed:SeD_A4737"/>
<dbReference type="HOGENOM" id="CLU_168367_0_0_6"/>
<dbReference type="Proteomes" id="UP000008322">
    <property type="component" value="Chromosome"/>
</dbReference>
<dbReference type="GO" id="GO:0045283">
    <property type="term" value="C:fumarate reductase complex"/>
    <property type="evidence" value="ECO:0007669"/>
    <property type="project" value="UniProtKB-UniRule"/>
</dbReference>
<dbReference type="GO" id="GO:0005886">
    <property type="term" value="C:plasma membrane"/>
    <property type="evidence" value="ECO:0007669"/>
    <property type="project" value="UniProtKB-SubCell"/>
</dbReference>
<dbReference type="GO" id="GO:0000104">
    <property type="term" value="F:succinate dehydrogenase activity"/>
    <property type="evidence" value="ECO:0007669"/>
    <property type="project" value="UniProtKB-UniRule"/>
</dbReference>
<dbReference type="GO" id="GO:0006106">
    <property type="term" value="P:fumarate metabolic process"/>
    <property type="evidence" value="ECO:0007669"/>
    <property type="project" value="InterPro"/>
</dbReference>
<dbReference type="CDD" id="cd00547">
    <property type="entry name" value="QFR_TypeD_subunitD"/>
    <property type="match status" value="1"/>
</dbReference>
<dbReference type="FunFam" id="1.20.1300.10:FF:000002">
    <property type="entry name" value="Fumarate reductase subunit D"/>
    <property type="match status" value="1"/>
</dbReference>
<dbReference type="Gene3D" id="1.20.1300.10">
    <property type="entry name" value="Fumarate reductase/succinate dehydrogenase, transmembrane subunit"/>
    <property type="match status" value="1"/>
</dbReference>
<dbReference type="HAMAP" id="MF_00709">
    <property type="entry name" value="Fumarate_red_D"/>
    <property type="match status" value="1"/>
</dbReference>
<dbReference type="InterPro" id="IPR003418">
    <property type="entry name" value="Fumarate_red_D"/>
</dbReference>
<dbReference type="InterPro" id="IPR034804">
    <property type="entry name" value="SQR/QFR_C/D"/>
</dbReference>
<dbReference type="NCBIfam" id="NF003977">
    <property type="entry name" value="PRK05470.1-1"/>
    <property type="match status" value="1"/>
</dbReference>
<dbReference type="Pfam" id="PF02313">
    <property type="entry name" value="Fumarate_red_D"/>
    <property type="match status" value="1"/>
</dbReference>
<dbReference type="PIRSF" id="PIRSF000179">
    <property type="entry name" value="FrdD"/>
    <property type="match status" value="1"/>
</dbReference>
<dbReference type="SUPFAM" id="SSF81343">
    <property type="entry name" value="Fumarate reductase respiratory complex transmembrane subunits"/>
    <property type="match status" value="1"/>
</dbReference>
<keyword id="KW-0997">Cell inner membrane</keyword>
<keyword id="KW-1003">Cell membrane</keyword>
<keyword id="KW-0472">Membrane</keyword>
<keyword id="KW-0812">Transmembrane</keyword>
<keyword id="KW-1133">Transmembrane helix</keyword>
<feature type="chain" id="PRO_1000132409" description="Fumarate reductase subunit D">
    <location>
        <begin position="1"/>
        <end position="119"/>
    </location>
</feature>
<feature type="transmembrane region" description="Helical" evidence="1">
    <location>
        <begin position="25"/>
        <end position="45"/>
    </location>
</feature>
<feature type="transmembrane region" description="Helical" evidence="1">
    <location>
        <begin position="61"/>
        <end position="81"/>
    </location>
</feature>
<feature type="transmembrane region" description="Helical" evidence="1">
    <location>
        <begin position="99"/>
        <end position="119"/>
    </location>
</feature>
<reference key="1">
    <citation type="journal article" date="2011" name="J. Bacteriol.">
        <title>Comparative genomics of 28 Salmonella enterica isolates: evidence for CRISPR-mediated adaptive sublineage evolution.</title>
        <authorList>
            <person name="Fricke W.F."/>
            <person name="Mammel M.K."/>
            <person name="McDermott P.F."/>
            <person name="Tartera C."/>
            <person name="White D.G."/>
            <person name="Leclerc J.E."/>
            <person name="Ravel J."/>
            <person name="Cebula T.A."/>
        </authorList>
    </citation>
    <scope>NUCLEOTIDE SEQUENCE [LARGE SCALE GENOMIC DNA]</scope>
    <source>
        <strain>CT_02021853</strain>
    </source>
</reference>
<accession>B5FRL0</accession>
<organism>
    <name type="scientific">Salmonella dublin (strain CT_02021853)</name>
    <dbReference type="NCBI Taxonomy" id="439851"/>
    <lineage>
        <taxon>Bacteria</taxon>
        <taxon>Pseudomonadati</taxon>
        <taxon>Pseudomonadota</taxon>
        <taxon>Gammaproteobacteria</taxon>
        <taxon>Enterobacterales</taxon>
        <taxon>Enterobacteriaceae</taxon>
        <taxon>Salmonella</taxon>
    </lineage>
</organism>